<name>SUCC_PSYIN</name>
<dbReference type="EC" id="6.2.1.5" evidence="1"/>
<dbReference type="EMBL" id="CP000510">
    <property type="protein sequence ID" value="ABM03991.1"/>
    <property type="molecule type" value="Genomic_DNA"/>
</dbReference>
<dbReference type="RefSeq" id="WP_011770551.1">
    <property type="nucleotide sequence ID" value="NC_008709.1"/>
</dbReference>
<dbReference type="SMR" id="A1SWX6"/>
<dbReference type="STRING" id="357804.Ping_2250"/>
<dbReference type="KEGG" id="pin:Ping_2250"/>
<dbReference type="eggNOG" id="COG0045">
    <property type="taxonomic scope" value="Bacteria"/>
</dbReference>
<dbReference type="HOGENOM" id="CLU_037430_0_0_6"/>
<dbReference type="OrthoDB" id="9802602at2"/>
<dbReference type="UniPathway" id="UPA00223">
    <property type="reaction ID" value="UER00999"/>
</dbReference>
<dbReference type="Proteomes" id="UP000000639">
    <property type="component" value="Chromosome"/>
</dbReference>
<dbReference type="GO" id="GO:0005829">
    <property type="term" value="C:cytosol"/>
    <property type="evidence" value="ECO:0007669"/>
    <property type="project" value="TreeGrafter"/>
</dbReference>
<dbReference type="GO" id="GO:0042709">
    <property type="term" value="C:succinate-CoA ligase complex"/>
    <property type="evidence" value="ECO:0007669"/>
    <property type="project" value="TreeGrafter"/>
</dbReference>
<dbReference type="GO" id="GO:0005524">
    <property type="term" value="F:ATP binding"/>
    <property type="evidence" value="ECO:0007669"/>
    <property type="project" value="UniProtKB-UniRule"/>
</dbReference>
<dbReference type="GO" id="GO:0000287">
    <property type="term" value="F:magnesium ion binding"/>
    <property type="evidence" value="ECO:0007669"/>
    <property type="project" value="UniProtKB-UniRule"/>
</dbReference>
<dbReference type="GO" id="GO:0004775">
    <property type="term" value="F:succinate-CoA ligase (ADP-forming) activity"/>
    <property type="evidence" value="ECO:0007669"/>
    <property type="project" value="UniProtKB-UniRule"/>
</dbReference>
<dbReference type="GO" id="GO:0004776">
    <property type="term" value="F:succinate-CoA ligase (GDP-forming) activity"/>
    <property type="evidence" value="ECO:0007669"/>
    <property type="project" value="RHEA"/>
</dbReference>
<dbReference type="GO" id="GO:0006104">
    <property type="term" value="P:succinyl-CoA metabolic process"/>
    <property type="evidence" value="ECO:0007669"/>
    <property type="project" value="TreeGrafter"/>
</dbReference>
<dbReference type="GO" id="GO:0006099">
    <property type="term" value="P:tricarboxylic acid cycle"/>
    <property type="evidence" value="ECO:0007669"/>
    <property type="project" value="UniProtKB-UniRule"/>
</dbReference>
<dbReference type="FunFam" id="3.30.1490.20:FF:000002">
    <property type="entry name" value="Succinate--CoA ligase [ADP-forming] subunit beta"/>
    <property type="match status" value="1"/>
</dbReference>
<dbReference type="FunFam" id="3.30.470.20:FF:000002">
    <property type="entry name" value="Succinate--CoA ligase [ADP-forming] subunit beta"/>
    <property type="match status" value="1"/>
</dbReference>
<dbReference type="FunFam" id="3.40.50.261:FF:000001">
    <property type="entry name" value="Succinate--CoA ligase [ADP-forming] subunit beta"/>
    <property type="match status" value="1"/>
</dbReference>
<dbReference type="Gene3D" id="3.30.1490.20">
    <property type="entry name" value="ATP-grasp fold, A domain"/>
    <property type="match status" value="1"/>
</dbReference>
<dbReference type="Gene3D" id="3.30.470.20">
    <property type="entry name" value="ATP-grasp fold, B domain"/>
    <property type="match status" value="1"/>
</dbReference>
<dbReference type="Gene3D" id="3.40.50.261">
    <property type="entry name" value="Succinyl-CoA synthetase domains"/>
    <property type="match status" value="1"/>
</dbReference>
<dbReference type="HAMAP" id="MF_00558">
    <property type="entry name" value="Succ_CoA_beta"/>
    <property type="match status" value="1"/>
</dbReference>
<dbReference type="InterPro" id="IPR011761">
    <property type="entry name" value="ATP-grasp"/>
</dbReference>
<dbReference type="InterPro" id="IPR013650">
    <property type="entry name" value="ATP-grasp_succ-CoA_synth-type"/>
</dbReference>
<dbReference type="InterPro" id="IPR013815">
    <property type="entry name" value="ATP_grasp_subdomain_1"/>
</dbReference>
<dbReference type="InterPro" id="IPR017866">
    <property type="entry name" value="Succ-CoA_synthase_bsu_CS"/>
</dbReference>
<dbReference type="InterPro" id="IPR005811">
    <property type="entry name" value="SUCC_ACL_C"/>
</dbReference>
<dbReference type="InterPro" id="IPR005809">
    <property type="entry name" value="Succ_CoA_ligase-like_bsu"/>
</dbReference>
<dbReference type="InterPro" id="IPR016102">
    <property type="entry name" value="Succinyl-CoA_synth-like"/>
</dbReference>
<dbReference type="NCBIfam" id="NF001913">
    <property type="entry name" value="PRK00696.1"/>
    <property type="match status" value="1"/>
</dbReference>
<dbReference type="NCBIfam" id="TIGR01016">
    <property type="entry name" value="sucCoAbeta"/>
    <property type="match status" value="1"/>
</dbReference>
<dbReference type="PANTHER" id="PTHR11815:SF10">
    <property type="entry name" value="SUCCINATE--COA LIGASE [GDP-FORMING] SUBUNIT BETA, MITOCHONDRIAL"/>
    <property type="match status" value="1"/>
</dbReference>
<dbReference type="PANTHER" id="PTHR11815">
    <property type="entry name" value="SUCCINYL-COA SYNTHETASE BETA CHAIN"/>
    <property type="match status" value="1"/>
</dbReference>
<dbReference type="Pfam" id="PF08442">
    <property type="entry name" value="ATP-grasp_2"/>
    <property type="match status" value="1"/>
</dbReference>
<dbReference type="Pfam" id="PF00549">
    <property type="entry name" value="Ligase_CoA"/>
    <property type="match status" value="1"/>
</dbReference>
<dbReference type="PIRSF" id="PIRSF001554">
    <property type="entry name" value="SucCS_beta"/>
    <property type="match status" value="1"/>
</dbReference>
<dbReference type="SUPFAM" id="SSF56059">
    <property type="entry name" value="Glutathione synthetase ATP-binding domain-like"/>
    <property type="match status" value="1"/>
</dbReference>
<dbReference type="SUPFAM" id="SSF52210">
    <property type="entry name" value="Succinyl-CoA synthetase domains"/>
    <property type="match status" value="1"/>
</dbReference>
<dbReference type="PROSITE" id="PS50975">
    <property type="entry name" value="ATP_GRASP"/>
    <property type="match status" value="1"/>
</dbReference>
<dbReference type="PROSITE" id="PS01217">
    <property type="entry name" value="SUCCINYL_COA_LIG_3"/>
    <property type="match status" value="1"/>
</dbReference>
<feature type="chain" id="PRO_1000082178" description="Succinate--CoA ligase [ADP-forming] subunit beta">
    <location>
        <begin position="1"/>
        <end position="388"/>
    </location>
</feature>
<feature type="domain" description="ATP-grasp" evidence="1">
    <location>
        <begin position="9"/>
        <end position="244"/>
    </location>
</feature>
<feature type="binding site" evidence="1">
    <location>
        <position position="46"/>
    </location>
    <ligand>
        <name>ATP</name>
        <dbReference type="ChEBI" id="CHEBI:30616"/>
    </ligand>
</feature>
<feature type="binding site" evidence="1">
    <location>
        <begin position="53"/>
        <end position="55"/>
    </location>
    <ligand>
        <name>ATP</name>
        <dbReference type="ChEBI" id="CHEBI:30616"/>
    </ligand>
</feature>
<feature type="binding site" evidence="1">
    <location>
        <position position="99"/>
    </location>
    <ligand>
        <name>ATP</name>
        <dbReference type="ChEBI" id="CHEBI:30616"/>
    </ligand>
</feature>
<feature type="binding site" evidence="1">
    <location>
        <position position="102"/>
    </location>
    <ligand>
        <name>ATP</name>
        <dbReference type="ChEBI" id="CHEBI:30616"/>
    </ligand>
</feature>
<feature type="binding site" evidence="1">
    <location>
        <position position="107"/>
    </location>
    <ligand>
        <name>ATP</name>
        <dbReference type="ChEBI" id="CHEBI:30616"/>
    </ligand>
</feature>
<feature type="binding site" evidence="1">
    <location>
        <position position="199"/>
    </location>
    <ligand>
        <name>Mg(2+)</name>
        <dbReference type="ChEBI" id="CHEBI:18420"/>
    </ligand>
</feature>
<feature type="binding site" evidence="1">
    <location>
        <position position="213"/>
    </location>
    <ligand>
        <name>Mg(2+)</name>
        <dbReference type="ChEBI" id="CHEBI:18420"/>
    </ligand>
</feature>
<feature type="binding site" evidence="1">
    <location>
        <position position="264"/>
    </location>
    <ligand>
        <name>substrate</name>
        <note>ligand shared with subunit alpha</note>
    </ligand>
</feature>
<feature type="binding site" evidence="1">
    <location>
        <begin position="321"/>
        <end position="323"/>
    </location>
    <ligand>
        <name>substrate</name>
        <note>ligand shared with subunit alpha</note>
    </ligand>
</feature>
<evidence type="ECO:0000255" key="1">
    <source>
        <dbReference type="HAMAP-Rule" id="MF_00558"/>
    </source>
</evidence>
<protein>
    <recommendedName>
        <fullName evidence="1">Succinate--CoA ligase [ADP-forming] subunit beta</fullName>
        <ecNumber evidence="1">6.2.1.5</ecNumber>
    </recommendedName>
    <alternativeName>
        <fullName evidence="1">Succinyl-CoA synthetase subunit beta</fullName>
        <shortName evidence="1">SCS-beta</shortName>
    </alternativeName>
</protein>
<gene>
    <name evidence="1" type="primary">sucC</name>
    <name type="ordered locus">Ping_2250</name>
</gene>
<accession>A1SWX6</accession>
<sequence>MNLHEYQAKQLFREYGLPVPQGIACDTAEEAVSAASQIGGDKWVIKCQVHAGGRGKAGGVELVSTKDGLREFAHKWLGKNLVTFQTDANGQPVNKLLVESCSDIANELYLGAVIDRASQRVTFMASTEGGVEIEKVAEETPELIHTAMIDPLVGAQAYQGRELAFKLGLSGKQIGQFTKIFLGLATLFEEKDLSLLEINPLVVTAQDDLICLDGKISIDSNAMYRQKALHAINDTTQDDEREMHAAQWELNYVALDGSIGCMVNGAGLAMGTMDIVHLHGGNPANFLDVGGGATKERVTEAFKIILSDDNVKAVLVNIFGGIVRCDLIADGVIGAVAEVGVTVPVIVRLEGNNADLGRKILAESGLNIIAAASLTDAAEQAVKAVGGK</sequence>
<reference key="1">
    <citation type="journal article" date="2008" name="BMC Genomics">
        <title>Genomics of an extreme psychrophile, Psychromonas ingrahamii.</title>
        <authorList>
            <person name="Riley M."/>
            <person name="Staley J.T."/>
            <person name="Danchin A."/>
            <person name="Wang T.Z."/>
            <person name="Brettin T.S."/>
            <person name="Hauser L.J."/>
            <person name="Land M.L."/>
            <person name="Thompson L.S."/>
        </authorList>
    </citation>
    <scope>NUCLEOTIDE SEQUENCE [LARGE SCALE GENOMIC DNA]</scope>
    <source>
        <strain>DSM 17664 / CCUG 51855 / 37</strain>
    </source>
</reference>
<comment type="function">
    <text evidence="1">Succinyl-CoA synthetase functions in the citric acid cycle (TCA), coupling the hydrolysis of succinyl-CoA to the synthesis of either ATP or GTP and thus represents the only step of substrate-level phosphorylation in the TCA. The beta subunit provides nucleotide specificity of the enzyme and binds the substrate succinate, while the binding sites for coenzyme A and phosphate are found in the alpha subunit.</text>
</comment>
<comment type="catalytic activity">
    <reaction evidence="1">
        <text>succinate + ATP + CoA = succinyl-CoA + ADP + phosphate</text>
        <dbReference type="Rhea" id="RHEA:17661"/>
        <dbReference type="ChEBI" id="CHEBI:30031"/>
        <dbReference type="ChEBI" id="CHEBI:30616"/>
        <dbReference type="ChEBI" id="CHEBI:43474"/>
        <dbReference type="ChEBI" id="CHEBI:57287"/>
        <dbReference type="ChEBI" id="CHEBI:57292"/>
        <dbReference type="ChEBI" id="CHEBI:456216"/>
        <dbReference type="EC" id="6.2.1.5"/>
    </reaction>
    <physiologicalReaction direction="right-to-left" evidence="1">
        <dbReference type="Rhea" id="RHEA:17663"/>
    </physiologicalReaction>
</comment>
<comment type="catalytic activity">
    <reaction evidence="1">
        <text>GTP + succinate + CoA = succinyl-CoA + GDP + phosphate</text>
        <dbReference type="Rhea" id="RHEA:22120"/>
        <dbReference type="ChEBI" id="CHEBI:30031"/>
        <dbReference type="ChEBI" id="CHEBI:37565"/>
        <dbReference type="ChEBI" id="CHEBI:43474"/>
        <dbReference type="ChEBI" id="CHEBI:57287"/>
        <dbReference type="ChEBI" id="CHEBI:57292"/>
        <dbReference type="ChEBI" id="CHEBI:58189"/>
    </reaction>
    <physiologicalReaction direction="right-to-left" evidence="1">
        <dbReference type="Rhea" id="RHEA:22122"/>
    </physiologicalReaction>
</comment>
<comment type="cofactor">
    <cofactor evidence="1">
        <name>Mg(2+)</name>
        <dbReference type="ChEBI" id="CHEBI:18420"/>
    </cofactor>
    <text evidence="1">Binds 1 Mg(2+) ion per subunit.</text>
</comment>
<comment type="pathway">
    <text evidence="1">Carbohydrate metabolism; tricarboxylic acid cycle; succinate from succinyl-CoA (ligase route): step 1/1.</text>
</comment>
<comment type="subunit">
    <text evidence="1">Heterotetramer of two alpha and two beta subunits.</text>
</comment>
<comment type="similarity">
    <text evidence="1">Belongs to the succinate/malate CoA ligase beta subunit family.</text>
</comment>
<keyword id="KW-0067">ATP-binding</keyword>
<keyword id="KW-0436">Ligase</keyword>
<keyword id="KW-0460">Magnesium</keyword>
<keyword id="KW-0479">Metal-binding</keyword>
<keyword id="KW-0547">Nucleotide-binding</keyword>
<keyword id="KW-1185">Reference proteome</keyword>
<keyword id="KW-0816">Tricarboxylic acid cycle</keyword>
<proteinExistence type="inferred from homology"/>
<organism>
    <name type="scientific">Psychromonas ingrahamii (strain DSM 17664 / CCUG 51855 / 37)</name>
    <dbReference type="NCBI Taxonomy" id="357804"/>
    <lineage>
        <taxon>Bacteria</taxon>
        <taxon>Pseudomonadati</taxon>
        <taxon>Pseudomonadota</taxon>
        <taxon>Gammaproteobacteria</taxon>
        <taxon>Alteromonadales</taxon>
        <taxon>Psychromonadaceae</taxon>
        <taxon>Psychromonas</taxon>
    </lineage>
</organism>